<gene>
    <name evidence="1" type="primary">aroC</name>
    <name type="ordered locus">PSEEN1529</name>
</gene>
<reference key="1">
    <citation type="journal article" date="2006" name="Nat. Biotechnol.">
        <title>Complete genome sequence of the entomopathogenic and metabolically versatile soil bacterium Pseudomonas entomophila.</title>
        <authorList>
            <person name="Vodovar N."/>
            <person name="Vallenet D."/>
            <person name="Cruveiller S."/>
            <person name="Rouy Z."/>
            <person name="Barbe V."/>
            <person name="Acosta C."/>
            <person name="Cattolico L."/>
            <person name="Jubin C."/>
            <person name="Lajus A."/>
            <person name="Segurens B."/>
            <person name="Vacherie B."/>
            <person name="Wincker P."/>
            <person name="Weissenbach J."/>
            <person name="Lemaitre B."/>
            <person name="Medigue C."/>
            <person name="Boccard F."/>
        </authorList>
    </citation>
    <scope>NUCLEOTIDE SEQUENCE [LARGE SCALE GENOMIC DNA]</scope>
    <source>
        <strain>L48</strain>
    </source>
</reference>
<dbReference type="EC" id="4.2.3.5" evidence="1"/>
<dbReference type="EMBL" id="CT573326">
    <property type="protein sequence ID" value="CAK14394.1"/>
    <property type="molecule type" value="Genomic_DNA"/>
</dbReference>
<dbReference type="RefSeq" id="WP_011532809.1">
    <property type="nucleotide sequence ID" value="NC_008027.1"/>
</dbReference>
<dbReference type="SMR" id="Q1ID65"/>
<dbReference type="STRING" id="384676.PSEEN1529"/>
<dbReference type="GeneID" id="32804776"/>
<dbReference type="KEGG" id="pen:PSEEN1529"/>
<dbReference type="eggNOG" id="COG0082">
    <property type="taxonomic scope" value="Bacteria"/>
</dbReference>
<dbReference type="HOGENOM" id="CLU_034547_0_2_6"/>
<dbReference type="OrthoDB" id="9771806at2"/>
<dbReference type="UniPathway" id="UPA00053">
    <property type="reaction ID" value="UER00090"/>
</dbReference>
<dbReference type="Proteomes" id="UP000000658">
    <property type="component" value="Chromosome"/>
</dbReference>
<dbReference type="GO" id="GO:0005829">
    <property type="term" value="C:cytosol"/>
    <property type="evidence" value="ECO:0007669"/>
    <property type="project" value="TreeGrafter"/>
</dbReference>
<dbReference type="GO" id="GO:0004107">
    <property type="term" value="F:chorismate synthase activity"/>
    <property type="evidence" value="ECO:0007669"/>
    <property type="project" value="UniProtKB-UniRule"/>
</dbReference>
<dbReference type="GO" id="GO:0010181">
    <property type="term" value="F:FMN binding"/>
    <property type="evidence" value="ECO:0007669"/>
    <property type="project" value="TreeGrafter"/>
</dbReference>
<dbReference type="GO" id="GO:0008652">
    <property type="term" value="P:amino acid biosynthetic process"/>
    <property type="evidence" value="ECO:0007669"/>
    <property type="project" value="UniProtKB-KW"/>
</dbReference>
<dbReference type="GO" id="GO:0009073">
    <property type="term" value="P:aromatic amino acid family biosynthetic process"/>
    <property type="evidence" value="ECO:0007669"/>
    <property type="project" value="UniProtKB-KW"/>
</dbReference>
<dbReference type="GO" id="GO:0009423">
    <property type="term" value="P:chorismate biosynthetic process"/>
    <property type="evidence" value="ECO:0007669"/>
    <property type="project" value="UniProtKB-UniRule"/>
</dbReference>
<dbReference type="CDD" id="cd07304">
    <property type="entry name" value="Chorismate_synthase"/>
    <property type="match status" value="1"/>
</dbReference>
<dbReference type="FunFam" id="3.60.150.10:FF:000001">
    <property type="entry name" value="Chorismate synthase"/>
    <property type="match status" value="1"/>
</dbReference>
<dbReference type="Gene3D" id="3.60.150.10">
    <property type="entry name" value="Chorismate synthase AroC"/>
    <property type="match status" value="1"/>
</dbReference>
<dbReference type="HAMAP" id="MF_00300">
    <property type="entry name" value="Chorismate_synth"/>
    <property type="match status" value="1"/>
</dbReference>
<dbReference type="InterPro" id="IPR000453">
    <property type="entry name" value="Chorismate_synth"/>
</dbReference>
<dbReference type="InterPro" id="IPR035904">
    <property type="entry name" value="Chorismate_synth_AroC_sf"/>
</dbReference>
<dbReference type="InterPro" id="IPR020541">
    <property type="entry name" value="Chorismate_synthase_CS"/>
</dbReference>
<dbReference type="NCBIfam" id="TIGR00033">
    <property type="entry name" value="aroC"/>
    <property type="match status" value="1"/>
</dbReference>
<dbReference type="NCBIfam" id="NF003793">
    <property type="entry name" value="PRK05382.1"/>
    <property type="match status" value="1"/>
</dbReference>
<dbReference type="PANTHER" id="PTHR21085">
    <property type="entry name" value="CHORISMATE SYNTHASE"/>
    <property type="match status" value="1"/>
</dbReference>
<dbReference type="PANTHER" id="PTHR21085:SF0">
    <property type="entry name" value="CHORISMATE SYNTHASE"/>
    <property type="match status" value="1"/>
</dbReference>
<dbReference type="Pfam" id="PF01264">
    <property type="entry name" value="Chorismate_synt"/>
    <property type="match status" value="1"/>
</dbReference>
<dbReference type="PIRSF" id="PIRSF001456">
    <property type="entry name" value="Chorismate_synth"/>
    <property type="match status" value="1"/>
</dbReference>
<dbReference type="SUPFAM" id="SSF103263">
    <property type="entry name" value="Chorismate synthase, AroC"/>
    <property type="match status" value="1"/>
</dbReference>
<dbReference type="PROSITE" id="PS00787">
    <property type="entry name" value="CHORISMATE_SYNTHASE_1"/>
    <property type="match status" value="1"/>
</dbReference>
<dbReference type="PROSITE" id="PS00788">
    <property type="entry name" value="CHORISMATE_SYNTHASE_2"/>
    <property type="match status" value="1"/>
</dbReference>
<dbReference type="PROSITE" id="PS00789">
    <property type="entry name" value="CHORISMATE_SYNTHASE_3"/>
    <property type="match status" value="1"/>
</dbReference>
<proteinExistence type="inferred from homology"/>
<keyword id="KW-0028">Amino-acid biosynthesis</keyword>
<keyword id="KW-0057">Aromatic amino acid biosynthesis</keyword>
<keyword id="KW-0274">FAD</keyword>
<keyword id="KW-0285">Flavoprotein</keyword>
<keyword id="KW-0288">FMN</keyword>
<keyword id="KW-0456">Lyase</keyword>
<keyword id="KW-0521">NADP</keyword>
<accession>Q1ID65</accession>
<evidence type="ECO:0000255" key="1">
    <source>
        <dbReference type="HAMAP-Rule" id="MF_00300"/>
    </source>
</evidence>
<organism>
    <name type="scientific">Pseudomonas entomophila (strain L48)</name>
    <dbReference type="NCBI Taxonomy" id="384676"/>
    <lineage>
        <taxon>Bacteria</taxon>
        <taxon>Pseudomonadati</taxon>
        <taxon>Pseudomonadota</taxon>
        <taxon>Gammaproteobacteria</taxon>
        <taxon>Pseudomonadales</taxon>
        <taxon>Pseudomonadaceae</taxon>
        <taxon>Pseudomonas</taxon>
    </lineage>
</organism>
<sequence length="363" mass="39010">MSGNTYGKLFTVTTAGESHGPALVAIVDGCPPGLEISLADLQHDLDRRKPGTSRHTTQRQEPDEVEILSGVFEGRTTGCSIGLLIRNTDQKSKDYSAIKDLFRPAHADYTYHHKYGLRDYRGGGRSSARETAMRVAAGAIAKKFLATQGIRVRGYMSQLGPIEIPFKTWDSVEQNAFFSPDPDKVPELEAYMDQLRRDQDSVGAKITVVAEGVMPGLGEPIFDRLDAELAHALMSINAVKGVEIGAGFASVAQRGTEHRDELTPEGFLSNNAGGILGGISSGQPIVAHLALKPTSSITTPGRSIDVDGNPVEVITKGRHDPCVGIRATPIAEAMMAIVLMDHLLRHRAQNAEVKVGTPVLGQL</sequence>
<protein>
    <recommendedName>
        <fullName evidence="1">Chorismate synthase</fullName>
        <shortName evidence="1">CS</shortName>
        <ecNumber evidence="1">4.2.3.5</ecNumber>
    </recommendedName>
    <alternativeName>
        <fullName evidence="1">5-enolpyruvylshikimate-3-phosphate phospholyase</fullName>
    </alternativeName>
</protein>
<feature type="chain" id="PRO_1000022529" description="Chorismate synthase">
    <location>
        <begin position="1"/>
        <end position="363"/>
    </location>
</feature>
<feature type="binding site" evidence="1">
    <location>
        <position position="48"/>
    </location>
    <ligand>
        <name>NADP(+)</name>
        <dbReference type="ChEBI" id="CHEBI:58349"/>
    </ligand>
</feature>
<feature type="binding site" evidence="1">
    <location>
        <position position="54"/>
    </location>
    <ligand>
        <name>NADP(+)</name>
        <dbReference type="ChEBI" id="CHEBI:58349"/>
    </ligand>
</feature>
<feature type="binding site" evidence="1">
    <location>
        <begin position="125"/>
        <end position="127"/>
    </location>
    <ligand>
        <name>FMN</name>
        <dbReference type="ChEBI" id="CHEBI:58210"/>
    </ligand>
</feature>
<feature type="binding site" evidence="1">
    <location>
        <begin position="237"/>
        <end position="238"/>
    </location>
    <ligand>
        <name>FMN</name>
        <dbReference type="ChEBI" id="CHEBI:58210"/>
    </ligand>
</feature>
<feature type="binding site" evidence="1">
    <location>
        <position position="277"/>
    </location>
    <ligand>
        <name>FMN</name>
        <dbReference type="ChEBI" id="CHEBI:58210"/>
    </ligand>
</feature>
<feature type="binding site" evidence="1">
    <location>
        <begin position="292"/>
        <end position="296"/>
    </location>
    <ligand>
        <name>FMN</name>
        <dbReference type="ChEBI" id="CHEBI:58210"/>
    </ligand>
</feature>
<feature type="binding site" evidence="1">
    <location>
        <position position="318"/>
    </location>
    <ligand>
        <name>FMN</name>
        <dbReference type="ChEBI" id="CHEBI:58210"/>
    </ligand>
</feature>
<name>AROC_PSEE4</name>
<comment type="function">
    <text evidence="1">Catalyzes the anti-1,4-elimination of the C-3 phosphate and the C-6 proR hydrogen from 5-enolpyruvylshikimate-3-phosphate (EPSP) to yield chorismate, which is the branch point compound that serves as the starting substrate for the three terminal pathways of aromatic amino acid biosynthesis. This reaction introduces a second double bond into the aromatic ring system.</text>
</comment>
<comment type="catalytic activity">
    <reaction evidence="1">
        <text>5-O-(1-carboxyvinyl)-3-phosphoshikimate = chorismate + phosphate</text>
        <dbReference type="Rhea" id="RHEA:21020"/>
        <dbReference type="ChEBI" id="CHEBI:29748"/>
        <dbReference type="ChEBI" id="CHEBI:43474"/>
        <dbReference type="ChEBI" id="CHEBI:57701"/>
        <dbReference type="EC" id="4.2.3.5"/>
    </reaction>
</comment>
<comment type="cofactor">
    <cofactor evidence="1">
        <name>FMNH2</name>
        <dbReference type="ChEBI" id="CHEBI:57618"/>
    </cofactor>
    <text evidence="1">Reduced FMN (FMNH(2)).</text>
</comment>
<comment type="pathway">
    <text evidence="1">Metabolic intermediate biosynthesis; chorismate biosynthesis; chorismate from D-erythrose 4-phosphate and phosphoenolpyruvate: step 7/7.</text>
</comment>
<comment type="subunit">
    <text evidence="1">Homotetramer.</text>
</comment>
<comment type="similarity">
    <text evidence="1">Belongs to the chorismate synthase family.</text>
</comment>